<dbReference type="EC" id="3.4.21.85" evidence="3 5"/>
<dbReference type="EMBL" id="D16623">
    <property type="protein sequence ID" value="BAA04045.1"/>
    <property type="molecule type" value="mRNA"/>
</dbReference>
<dbReference type="PIR" id="B49878">
    <property type="entry name" value="B49878"/>
</dbReference>
<dbReference type="SMR" id="Q27083"/>
<dbReference type="MEROPS" id="S01.222"/>
<dbReference type="GO" id="GO:0004252">
    <property type="term" value="F:serine-type endopeptidase activity"/>
    <property type="evidence" value="ECO:0000314"/>
    <property type="project" value="UniProtKB"/>
</dbReference>
<dbReference type="GO" id="GO:0008236">
    <property type="term" value="F:serine-type peptidase activity"/>
    <property type="evidence" value="ECO:0000314"/>
    <property type="project" value="UniProtKB"/>
</dbReference>
<dbReference type="GO" id="GO:0042381">
    <property type="term" value="P:hemolymph coagulation"/>
    <property type="evidence" value="ECO:0000314"/>
    <property type="project" value="UniProtKB"/>
</dbReference>
<dbReference type="GO" id="GO:0016485">
    <property type="term" value="P:protein processing"/>
    <property type="evidence" value="ECO:0000314"/>
    <property type="project" value="UniProtKB"/>
</dbReference>
<dbReference type="CDD" id="cd00190">
    <property type="entry name" value="Tryp_SPc"/>
    <property type="match status" value="1"/>
</dbReference>
<dbReference type="FunFam" id="2.40.10.10:FF:000006">
    <property type="entry name" value="Serine proteinase stubble"/>
    <property type="match status" value="1"/>
</dbReference>
<dbReference type="Gene3D" id="2.40.10.10">
    <property type="entry name" value="Trypsin-like serine proteases"/>
    <property type="match status" value="1"/>
</dbReference>
<dbReference type="InterPro" id="IPR009003">
    <property type="entry name" value="Peptidase_S1_PA"/>
</dbReference>
<dbReference type="InterPro" id="IPR043504">
    <property type="entry name" value="Peptidase_S1_PA_chymotrypsin"/>
</dbReference>
<dbReference type="InterPro" id="IPR001314">
    <property type="entry name" value="Peptidase_S1A"/>
</dbReference>
<dbReference type="InterPro" id="IPR001254">
    <property type="entry name" value="Trypsin_dom"/>
</dbReference>
<dbReference type="InterPro" id="IPR018114">
    <property type="entry name" value="TRYPSIN_HIS"/>
</dbReference>
<dbReference type="InterPro" id="IPR033116">
    <property type="entry name" value="TRYPSIN_SER"/>
</dbReference>
<dbReference type="PANTHER" id="PTHR24252">
    <property type="entry name" value="ACROSIN-RELATED"/>
    <property type="match status" value="1"/>
</dbReference>
<dbReference type="PANTHER" id="PTHR24252:SF7">
    <property type="entry name" value="HYALIN"/>
    <property type="match status" value="1"/>
</dbReference>
<dbReference type="Pfam" id="PF00089">
    <property type="entry name" value="Trypsin"/>
    <property type="match status" value="1"/>
</dbReference>
<dbReference type="PRINTS" id="PR00722">
    <property type="entry name" value="CHYMOTRYPSIN"/>
</dbReference>
<dbReference type="SMART" id="SM00020">
    <property type="entry name" value="Tryp_SPc"/>
    <property type="match status" value="1"/>
</dbReference>
<dbReference type="SUPFAM" id="SSF50494">
    <property type="entry name" value="Trypsin-like serine proteases"/>
    <property type="match status" value="1"/>
</dbReference>
<dbReference type="PROSITE" id="PS50240">
    <property type="entry name" value="TRYPSIN_DOM"/>
    <property type="match status" value="1"/>
</dbReference>
<dbReference type="PROSITE" id="PS00134">
    <property type="entry name" value="TRYPSIN_HIS"/>
    <property type="match status" value="1"/>
</dbReference>
<dbReference type="PROSITE" id="PS00135">
    <property type="entry name" value="TRYPSIN_SER"/>
    <property type="match status" value="1"/>
</dbReference>
<evidence type="ECO:0000255" key="1">
    <source>
        <dbReference type="PROSITE-ProRule" id="PRU00274"/>
    </source>
</evidence>
<evidence type="ECO:0000255" key="2">
    <source>
        <dbReference type="PROSITE-ProRule" id="PRU00498"/>
    </source>
</evidence>
<evidence type="ECO:0000269" key="3">
    <source>
    </source>
</evidence>
<evidence type="ECO:0000269" key="4">
    <source>
    </source>
</evidence>
<evidence type="ECO:0000269" key="5">
    <source>
    </source>
</evidence>
<evidence type="ECO:0000303" key="6">
    <source>
    </source>
</evidence>
<evidence type="ECO:0000305" key="7"/>
<evidence type="ECO:0000305" key="8">
    <source>
    </source>
</evidence>
<evidence type="ECO:0000305" key="9">
    <source>
    </source>
</evidence>
<evidence type="ECO:0000312" key="10">
    <source>
        <dbReference type="EMBL" id="BAA04045.1"/>
    </source>
</evidence>
<reference evidence="10" key="1">
    <citation type="journal article" date="1994" name="J. Biol. Chem.">
        <title>Horseshoe crab (1,3)-beta-D-glucan-sensitive coagulation factor G. A serine protease zymogen heterodimer with similarities to beta-glucan-binding proteins.</title>
        <authorList>
            <person name="Seki N."/>
            <person name="Muta T."/>
            <person name="Oda T."/>
            <person name="Iwaki D."/>
            <person name="Kuma K."/>
            <person name="Miyata T."/>
            <person name="Iwanaga S."/>
        </authorList>
    </citation>
    <scope>NUCLEOTIDE SEQUENCE [MRNA]</scope>
    <scope>PROTEIN SEQUENCE OF 32-69; 82-118; 174-184 AND 190-257</scope>
    <scope>SUBUNIT</scope>
    <scope>TISSUE SPECIFICITY</scope>
    <scope>DISULFIDE BOND</scope>
</reference>
<reference evidence="7" key="2">
    <citation type="journal article" date="1995" name="J. Biol. Chem.">
        <title>Purified horseshoe crab factor G. Reconstitution and characterization of the (1--&gt;3)-beta-D-glucan-sensitive serine protease cascade.</title>
        <authorList>
            <person name="Muta T."/>
            <person name="Seki N."/>
            <person name="Takaki Y."/>
            <person name="Hashimoto R."/>
            <person name="Oda T."/>
            <person name="Iwanaga A."/>
            <person name="Tokunaga F."/>
            <person name="Iwanaga S."/>
        </authorList>
    </citation>
    <scope>FUNCTION</scope>
    <scope>CATALYTIC ACTIVITY</scope>
    <scope>ACTIVITY REGULATION</scope>
    <scope>SUBUNIT</scope>
    <scope>TISSUE SPECIFICITY</scope>
    <scope>BIOTECHNOLOGY</scope>
    <scope>DISULFIDE BOND</scope>
</reference>
<reference evidence="7" key="3">
    <citation type="journal article" date="1996" name="J. Biol. Chem.">
        <title>Limulus intracellular coagulation inhibitor type 3. Purification, characterization, cDNA cloning, and tissue localization.</title>
        <authorList>
            <person name="Agarwala K.L."/>
            <person name="Kawabata S."/>
            <person name="Miura Y."/>
            <person name="Kuroki Y."/>
            <person name="Iwanaga S."/>
        </authorList>
    </citation>
    <scope>CATALYTIC ACTIVITY</scope>
    <scope>ACTIVITY REGULATION</scope>
    <scope>SUBUNIT</scope>
</reference>
<feature type="signal peptide" evidence="4">
    <location>
        <begin position="1"/>
        <end position="31"/>
    </location>
</feature>
<feature type="chain" id="PRO_0000450356" description="Clotting factor G beta subunit light chain" evidence="4">
    <location>
        <begin position="32"/>
        <end position="46"/>
    </location>
</feature>
<feature type="chain" id="PRO_5004203470" description="Clotting factor G beta subunit heavy chain" evidence="4">
    <location>
        <begin position="47"/>
        <end position="309"/>
    </location>
</feature>
<feature type="domain" description="Peptidase S1" evidence="1">
    <location>
        <begin position="47"/>
        <end position="292"/>
    </location>
</feature>
<feature type="active site" description="Charge relay system" evidence="1">
    <location>
        <position position="89"/>
    </location>
</feature>
<feature type="active site" description="Charge relay system" evidence="1">
    <location>
        <position position="138"/>
    </location>
</feature>
<feature type="active site" description="Charge relay system" evidence="1">
    <location>
        <position position="242"/>
    </location>
</feature>
<feature type="glycosylation site" description="N-linked (GlcNAc...) asparagine" evidence="2">
    <location>
        <position position="100"/>
    </location>
</feature>
<feature type="glycosylation site" description="N-linked (GlcNAc...) asparagine" evidence="2">
    <location>
        <position position="206"/>
    </location>
</feature>
<feature type="disulfide bond" evidence="9">
    <location>
        <begin position="38"/>
        <end position="158"/>
    </location>
</feature>
<feature type="disulfide bond" evidence="1">
    <location>
        <begin position="74"/>
        <end position="90"/>
    </location>
</feature>
<feature type="disulfide bond" evidence="1">
    <location>
        <begin position="205"/>
        <end position="227"/>
    </location>
</feature>
<feature type="disulfide bond" evidence="1">
    <location>
        <begin position="238"/>
        <end position="268"/>
    </location>
</feature>
<protein>
    <recommendedName>
        <fullName evidence="6">Clotting factor G beta subunit</fullName>
        <ecNumber evidence="3 5">3.4.21.85</ecNumber>
    </recommendedName>
    <component>
        <recommendedName>
            <fullName evidence="7">Clotting factor G beta subunit light chain</fullName>
        </recommendedName>
    </component>
    <component>
        <recommendedName>
            <fullName evidence="7">Clotting factor G beta subunit heavy chain</fullName>
        </recommendedName>
    </component>
</protein>
<organism evidence="10">
    <name type="scientific">Tachypleus tridentatus</name>
    <name type="common">Japanese horseshoe crab</name>
    <dbReference type="NCBI Taxonomy" id="6853"/>
    <lineage>
        <taxon>Eukaryota</taxon>
        <taxon>Metazoa</taxon>
        <taxon>Ecdysozoa</taxon>
        <taxon>Arthropoda</taxon>
        <taxon>Chelicerata</taxon>
        <taxon>Merostomata</taxon>
        <taxon>Xiphosura</taxon>
        <taxon>Limulidae</taxon>
        <taxon>Tachypleus</taxon>
    </lineage>
</organism>
<name>CFGB_TACTR</name>
<keyword id="KW-0903">Direct protein sequencing</keyword>
<keyword id="KW-1015">Disulfide bond</keyword>
<keyword id="KW-0325">Glycoprotein</keyword>
<keyword id="KW-0353">Hemolymph clotting</keyword>
<keyword id="KW-0378">Hydrolase</keyword>
<keyword id="KW-0645">Protease</keyword>
<keyword id="KW-0720">Serine protease</keyword>
<keyword id="KW-0732">Signal</keyword>
<keyword id="KW-0865">Zymogen</keyword>
<sequence length="309" mass="34265">MDISFLVFITLSMALFSSNVTGTSVTSRVRRGINEKHCGFRPVITRIIGGGIATPHSWPWMVGIFKVNPHRFLCGGSIINKVSVVTAAHCLVTQFGNRQNYSIFVRVGAHDIDNSGTNYQVDKVIVHQGYKHHSHYYDIGLILLSKPVEYNDKIQPVCIPEFNKPHVNLNNIKVVITGWGVTGKATEKRNVLRELELPVVTNEQCNKSYQTLPFSKLNRGITNDMICAGFPEGGKDACQGDSGGPLMYQNPTTGRVKIVGVVSFGFECARPNFPGVYTRLSSYVNWLQEITFGQSLASLFEVVPIFIPE</sequence>
<comment type="function">
    <text evidence="3 8">Component of the heterodimer clotting factor G which may play a role in defense mechanisms against fungi (Probable). Initiates a (1-&gt;3)-beta-glucan-sensing clotting pathway whereby the alpha subunit binds to glucans containing (1-&gt;3)-beta linkages, which are components of the fungal cell wall, and the beta subunit catalyzes the activation of proclotting enzyme (PubMed:7822328).</text>
</comment>
<comment type="catalytic activity">
    <reaction evidence="3 5">
        <text>Selective cleavage of 98-Arg-|-Ile-99 bond in Limulus proclotting enzyme to form active clotting enzyme.</text>
        <dbReference type="EC" id="3.4.21.85"/>
    </reaction>
</comment>
<comment type="activity regulation">
    <text evidence="3 5">Binding to (1-&gt;3)-beta-D-glucan to alpha subunit, induces autocatalysis and activation of beta subunit (PubMed:7822328). Inhibited by intracellular coagulation inhibitor 3/LICI-3 and to a lesser extend by intracellular coagulation inhibitor 2/LICI-2 (PubMed:7822328, PubMed:8798603).</text>
</comment>
<comment type="subunit">
    <text evidence="3 5">Clotting factor G is a heterodimer composed of two non-covalently associated subunits, alpha and beta (PubMed:7822328). Upon activation, converted to a two-chain active form linked by a disulfide bond (PubMed:7822328). Forms a covalent heterodimer with intracellular coagulation inhibitor 3/LICI-3 (PubMed:8798603).</text>
</comment>
<comment type="tissue specificity">
    <text evidence="3 4">Expressed in the hemocytes (at protein level).</text>
</comment>
<comment type="biotechnology">
    <text evidence="8">Clotting factor G is a component of the Limulus test used to detect bacterial endotoxins in fluids.</text>
</comment>
<comment type="similarity">
    <text evidence="7">Belongs to the peptidase S1 family.</text>
</comment>
<accession>Q27083</accession>
<proteinExistence type="evidence at protein level"/>